<feature type="signal peptide" evidence="2">
    <location>
        <begin position="1"/>
        <end position="17"/>
    </location>
</feature>
<feature type="propeptide" id="PRO_0000419871" evidence="5">
    <location>
        <begin position="18"/>
        <end position="44"/>
    </location>
</feature>
<feature type="peptide" id="PRO_0000419872" description="Alpha-conotoxin CnIJ" evidence="3">
    <location>
        <begin position="45"/>
        <end position="59"/>
    </location>
</feature>
<feature type="peptide" id="PRO_0000419873" description="Alpha-conotoxin CnIE" evidence="3">
    <location>
        <begin position="47"/>
        <end position="59"/>
    </location>
</feature>
<feature type="modified residue" description="Cysteine amide" evidence="3">
    <location>
        <position position="59"/>
    </location>
</feature>
<feature type="disulfide bond" evidence="1">
    <location>
        <begin position="47"/>
        <end position="52"/>
    </location>
</feature>
<feature type="disulfide bond" evidence="1">
    <location>
        <begin position="48"/>
        <end position="59"/>
    </location>
</feature>
<name>CA1E_CONCN</name>
<keyword id="KW-0027">Amidation</keyword>
<keyword id="KW-1015">Disulfide bond</keyword>
<keyword id="KW-0964">Secreted</keyword>
<keyword id="KW-0732">Signal</keyword>
<keyword id="KW-0800">Toxin</keyword>
<accession>P0DKP7</accession>
<organism>
    <name type="scientific">Conus consors</name>
    <name type="common">Singed cone</name>
    <dbReference type="NCBI Taxonomy" id="101297"/>
    <lineage>
        <taxon>Eukaryota</taxon>
        <taxon>Metazoa</taxon>
        <taxon>Spiralia</taxon>
        <taxon>Lophotrochozoa</taxon>
        <taxon>Mollusca</taxon>
        <taxon>Gastropoda</taxon>
        <taxon>Caenogastropoda</taxon>
        <taxon>Neogastropoda</taxon>
        <taxon>Conoidea</taxon>
        <taxon>Conidae</taxon>
        <taxon>Conus</taxon>
        <taxon>Pionoconus</taxon>
    </lineage>
</organism>
<sequence>MMFTVFLLVVLTTTVVSFPSDSASDGRDDEAKDERSDMYELKRNGRCCHPACGGKYFKCGR</sequence>
<dbReference type="GO" id="GO:0005576">
    <property type="term" value="C:extracellular region"/>
    <property type="evidence" value="ECO:0007669"/>
    <property type="project" value="UniProtKB-SubCell"/>
</dbReference>
<dbReference type="GO" id="GO:0030550">
    <property type="term" value="F:acetylcholine receptor inhibitor activity"/>
    <property type="evidence" value="ECO:0007669"/>
    <property type="project" value="InterPro"/>
</dbReference>
<dbReference type="GO" id="GO:0090729">
    <property type="term" value="F:toxin activity"/>
    <property type="evidence" value="ECO:0007669"/>
    <property type="project" value="UniProtKB-KW"/>
</dbReference>
<dbReference type="InterPro" id="IPR009958">
    <property type="entry name" value="Conotoxin_a-typ"/>
</dbReference>
<dbReference type="Pfam" id="PF07365">
    <property type="entry name" value="Toxin_8"/>
    <property type="match status" value="1"/>
</dbReference>
<evidence type="ECO:0000250" key="1"/>
<evidence type="ECO:0000255" key="2"/>
<evidence type="ECO:0000269" key="3">
    <source>
    </source>
</evidence>
<evidence type="ECO:0000305" key="4"/>
<evidence type="ECO:0000305" key="5">
    <source>
    </source>
</evidence>
<proteinExistence type="evidence at protein level"/>
<comment type="subcellular location">
    <subcellularLocation>
        <location evidence="3">Secreted</location>
    </subcellularLocation>
</comment>
<comment type="tissue specificity">
    <text evidence="5">Expressed by the venom duct.</text>
</comment>
<comment type="domain">
    <text evidence="4">The cysteine framework is I (CC-C-C). Alpha3/6 pattern.</text>
</comment>
<comment type="mass spectrometry">
    <molecule>Alpha-conotoxin CnIJ</molecule>
    <text>CnIJ.</text>
</comment>
<comment type="mass spectrometry">
    <molecule>Alpha-conotoxin CnIE</molecule>
    <text>CnIE.</text>
</comment>
<comment type="miscellaneous">
    <text evidence="5">Found in injectable (milked) (IV) venom.</text>
</comment>
<comment type="similarity">
    <text evidence="4">Belongs to the conotoxin A superfamily.</text>
</comment>
<reference key="1">
    <citation type="journal article" date="2012" name="J. Proteomics">
        <title>Large-scale discovery of conopeptides and conoproteins in the injectable venom of a fish-hunting cone snail using a combined proteomic and transcriptomic approach.</title>
        <authorList>
            <person name="Violette A."/>
            <person name="Biass D."/>
            <person name="Dutertre S."/>
            <person name="Koua D."/>
            <person name="Piquemal D."/>
            <person name="Pierrat F."/>
            <person name="Stocklin R."/>
            <person name="Favreau P."/>
        </authorList>
    </citation>
    <scope>NUCLEOTIDE SEQUENCE [MRNA]</scope>
    <scope>AMIDATION AT CYS-59</scope>
    <scope>MASS SPECTROMETRY</scope>
    <scope>IDENTIFICATION BY MASS SPECTROMETRY</scope>
    <scope>SUBCELLULAR LOCATION</scope>
    <source>
        <tissue>Venom</tissue>
        <tissue>Venom duct</tissue>
    </source>
</reference>
<protein>
    <recommendedName>
        <fullName>Alpha-conotoxin CnIJ</fullName>
    </recommendedName>
    <component>
        <recommendedName>
            <fullName>Alpha-conotoxin CnIE</fullName>
        </recommendedName>
    </component>
</protein>